<sequence>MFRNRRILLYARRFFLVWICFLFITSWSLIQRHLKNWLVQAPDLKLSGSLQDTGIKVRDVRISKCYSWFSNCDAIWDYSLQDDLVTWYRIDMGKMQDTSIGQGFGWTSYVYWQPLYPNERGSAVVDLALSRNGLPLGLANERYNKIKNNDIDGYHVHSNTDNEFYVKDDSSNRFNPDMKWSAKFGNHLEDWFWRGDGIWCKYGRRSNGIKEIKAFIGEDFIESRPMWKEMVHCLHREGYSKPISISFQKSRLDDFTYGKEKDLSQISEPSLVMKRADFKILQISDLHFGRHIVSDSRKEKPDSIFRYDWPNVQFIHSVIRNERPDLAVITGHIFKDFNKNLDYESQILKMVSPIISNGIPFLFTWGEPQVTTEFKVNILNFIKSLPFCLNKFDLKNSTYLMLPLLLPAKTPGSQKQIGTIFAFDSNVTESYNFLDKFPRSPQSVYNLAFQHLPLHEYRPQGSFALIGNYEQKGSLDYIPHTKAFRNLLGEKDIKAISCGHEHGNDCCVLSDGKQQNLKNNMWLCYGGVTGYDQAYESKVRIFKIDTEKNDITSWKRSIKDTSKVSDYQYIWSRTLNTQ</sequence>
<comment type="function">
    <text evidence="1">May be involved in the activation of the plasma membrane proton-ATPase by glucose.</text>
</comment>
<accession>Q6CPQ2</accession>
<evidence type="ECO:0000250" key="1"/>
<evidence type="ECO:0000255" key="2"/>
<proteinExistence type="inferred from homology"/>
<reference key="1">
    <citation type="journal article" date="2004" name="Nature">
        <title>Genome evolution in yeasts.</title>
        <authorList>
            <person name="Dujon B."/>
            <person name="Sherman D."/>
            <person name="Fischer G."/>
            <person name="Durrens P."/>
            <person name="Casaregola S."/>
            <person name="Lafontaine I."/>
            <person name="de Montigny J."/>
            <person name="Marck C."/>
            <person name="Neuveglise C."/>
            <person name="Talla E."/>
            <person name="Goffard N."/>
            <person name="Frangeul L."/>
            <person name="Aigle M."/>
            <person name="Anthouard V."/>
            <person name="Babour A."/>
            <person name="Barbe V."/>
            <person name="Barnay S."/>
            <person name="Blanchin S."/>
            <person name="Beckerich J.-M."/>
            <person name="Beyne E."/>
            <person name="Bleykasten C."/>
            <person name="Boisrame A."/>
            <person name="Boyer J."/>
            <person name="Cattolico L."/>
            <person name="Confanioleri F."/>
            <person name="de Daruvar A."/>
            <person name="Despons L."/>
            <person name="Fabre E."/>
            <person name="Fairhead C."/>
            <person name="Ferry-Dumazet H."/>
            <person name="Groppi A."/>
            <person name="Hantraye F."/>
            <person name="Hennequin C."/>
            <person name="Jauniaux N."/>
            <person name="Joyet P."/>
            <person name="Kachouri R."/>
            <person name="Kerrest A."/>
            <person name="Koszul R."/>
            <person name="Lemaire M."/>
            <person name="Lesur I."/>
            <person name="Ma L."/>
            <person name="Muller H."/>
            <person name="Nicaud J.-M."/>
            <person name="Nikolski M."/>
            <person name="Oztas S."/>
            <person name="Ozier-Kalogeropoulos O."/>
            <person name="Pellenz S."/>
            <person name="Potier S."/>
            <person name="Richard G.-F."/>
            <person name="Straub M.-L."/>
            <person name="Suleau A."/>
            <person name="Swennen D."/>
            <person name="Tekaia F."/>
            <person name="Wesolowski-Louvel M."/>
            <person name="Westhof E."/>
            <person name="Wirth B."/>
            <person name="Zeniou-Meyer M."/>
            <person name="Zivanovic Y."/>
            <person name="Bolotin-Fukuhara M."/>
            <person name="Thierry A."/>
            <person name="Bouchier C."/>
            <person name="Caudron B."/>
            <person name="Scarpelli C."/>
            <person name="Gaillardin C."/>
            <person name="Weissenbach J."/>
            <person name="Wincker P."/>
            <person name="Souciet J.-L."/>
        </authorList>
    </citation>
    <scope>NUCLEOTIDE SEQUENCE [LARGE SCALE GENOMIC DNA]</scope>
    <source>
        <strain>ATCC 8585 / CBS 2359 / DSM 70799 / NBRC 1267 / NRRL Y-1140 / WM37</strain>
    </source>
</reference>
<feature type="signal peptide" evidence="2">
    <location>
        <begin position="1"/>
        <end position="28"/>
    </location>
</feature>
<feature type="chain" id="PRO_0000042718" description="Protein SIA1">
    <location>
        <begin position="29"/>
        <end position="578"/>
    </location>
</feature>
<dbReference type="EMBL" id="CR382125">
    <property type="protein sequence ID" value="CAG99174.1"/>
    <property type="molecule type" value="Genomic_DNA"/>
</dbReference>
<dbReference type="RefSeq" id="XP_454087.1">
    <property type="nucleotide sequence ID" value="XM_454087.1"/>
</dbReference>
<dbReference type="FunCoup" id="Q6CPQ2">
    <property type="interactions" value="107"/>
</dbReference>
<dbReference type="STRING" id="284590.Q6CPQ2"/>
<dbReference type="PaxDb" id="284590-Q6CPQ2"/>
<dbReference type="KEGG" id="kla:KLLA0_E03147g"/>
<dbReference type="eggNOG" id="KOG1432">
    <property type="taxonomic scope" value="Eukaryota"/>
</dbReference>
<dbReference type="HOGENOM" id="CLU_033929_0_0_1"/>
<dbReference type="InParanoid" id="Q6CPQ2"/>
<dbReference type="OMA" id="HEHGNDC"/>
<dbReference type="Proteomes" id="UP000000598">
    <property type="component" value="Chromosome E"/>
</dbReference>
<dbReference type="GO" id="GO:0005737">
    <property type="term" value="C:cytoplasm"/>
    <property type="evidence" value="ECO:0007669"/>
    <property type="project" value="TreeGrafter"/>
</dbReference>
<dbReference type="GO" id="GO:0004721">
    <property type="term" value="F:phosphoprotein phosphatase activity"/>
    <property type="evidence" value="ECO:0007669"/>
    <property type="project" value="TreeGrafter"/>
</dbReference>
<dbReference type="CDD" id="cd07383">
    <property type="entry name" value="MPP_Dcr2"/>
    <property type="match status" value="1"/>
</dbReference>
<dbReference type="Gene3D" id="3.60.21.10">
    <property type="match status" value="1"/>
</dbReference>
<dbReference type="InterPro" id="IPR004843">
    <property type="entry name" value="Calcineurin-like_PHP_ApaH"/>
</dbReference>
<dbReference type="InterPro" id="IPR029052">
    <property type="entry name" value="Metallo-depent_PP-like"/>
</dbReference>
<dbReference type="PANTHER" id="PTHR32440:SF0">
    <property type="entry name" value="PHOSPHATASE DCR2-RELATED"/>
    <property type="match status" value="1"/>
</dbReference>
<dbReference type="PANTHER" id="PTHR32440">
    <property type="entry name" value="PHOSPHATASE DCR2-RELATED-RELATED"/>
    <property type="match status" value="1"/>
</dbReference>
<dbReference type="Pfam" id="PF00149">
    <property type="entry name" value="Metallophos"/>
    <property type="match status" value="1"/>
</dbReference>
<dbReference type="SUPFAM" id="SSF56300">
    <property type="entry name" value="Metallo-dependent phosphatases"/>
    <property type="match status" value="1"/>
</dbReference>
<keyword id="KW-1185">Reference proteome</keyword>
<keyword id="KW-0732">Signal</keyword>
<organism>
    <name type="scientific">Kluyveromyces lactis (strain ATCC 8585 / CBS 2359 / DSM 70799 / NBRC 1267 / NRRL Y-1140 / WM37)</name>
    <name type="common">Yeast</name>
    <name type="synonym">Candida sphaerica</name>
    <dbReference type="NCBI Taxonomy" id="284590"/>
    <lineage>
        <taxon>Eukaryota</taxon>
        <taxon>Fungi</taxon>
        <taxon>Dikarya</taxon>
        <taxon>Ascomycota</taxon>
        <taxon>Saccharomycotina</taxon>
        <taxon>Saccharomycetes</taxon>
        <taxon>Saccharomycetales</taxon>
        <taxon>Saccharomycetaceae</taxon>
        <taxon>Kluyveromyces</taxon>
    </lineage>
</organism>
<name>SIA1_KLULA</name>
<gene>
    <name type="primary">SIA1</name>
    <name type="ordered locus">KLLA0E03080g</name>
</gene>
<protein>
    <recommendedName>
        <fullName>Protein SIA1</fullName>
    </recommendedName>
</protein>